<reference key="1">
    <citation type="journal article" date="2003" name="Nature">
        <title>Genome divergence in two Prochlorococcus ecotypes reflects oceanic niche differentiation.</title>
        <authorList>
            <person name="Rocap G."/>
            <person name="Larimer F.W."/>
            <person name="Lamerdin J.E."/>
            <person name="Malfatti S."/>
            <person name="Chain P."/>
            <person name="Ahlgren N.A."/>
            <person name="Arellano A."/>
            <person name="Coleman M."/>
            <person name="Hauser L."/>
            <person name="Hess W.R."/>
            <person name="Johnson Z.I."/>
            <person name="Land M.L."/>
            <person name="Lindell D."/>
            <person name="Post A.F."/>
            <person name="Regala W."/>
            <person name="Shah M."/>
            <person name="Shaw S.L."/>
            <person name="Steglich C."/>
            <person name="Sullivan M.B."/>
            <person name="Ting C.S."/>
            <person name="Tolonen A."/>
            <person name="Webb E.A."/>
            <person name="Zinser E.R."/>
            <person name="Chisholm S.W."/>
        </authorList>
    </citation>
    <scope>NUCLEOTIDE SEQUENCE [LARGE SCALE GENOMIC DNA]</scope>
    <source>
        <strain>MIT 9313</strain>
    </source>
</reference>
<keyword id="KW-0032">Aminotransferase</keyword>
<keyword id="KW-0663">Pyridoxal phosphate</keyword>
<keyword id="KW-1185">Reference proteome</keyword>
<keyword id="KW-0808">Transferase</keyword>
<protein>
    <recommendedName>
        <fullName evidence="1">LL-diaminopimelate aminotransferase</fullName>
        <shortName evidence="1">DAP-AT</shortName>
        <shortName evidence="1">DAP-aminotransferase</shortName>
        <shortName evidence="1">LL-DAP-aminotransferase</shortName>
        <ecNumber evidence="1">2.6.1.83</ecNumber>
    </recommendedName>
</protein>
<sequence>MVQVNSNYLKLKAGYLFPEIARRIKSFSEANPDAALIRLGIGDVTEPLPLACRNAMKVAIDEMGTNTGFHGYGPEQGYDWLRKAIAKHDFQTKGCQINAEEIFVSDGSKCDSSNILDILGSSNRIAVTDPVYPVYVDSNVMAGRTGDANQSGRYAGLSYLPINAENGFAAKIPSEPVDLIYLCFPNNPTGAVATRAQLQEWVNYARTNSVLILFDAAYEAFIQNPDLPHSIYEIEGARECAIEFRSFSKNAGFTGTRCAFTVVPKGLKGKSDDGSDVELWNLWNRRQSTKFNGVSYIIQRGAEAVYSAQGQGEINALVSFYMRNAAIIRRELTAAGIEVHGGEHAPYVWLKTPDDMDSWGFFDHLLQNAHVVGTPGSGFGAAGEGYFRLSAFNSRVNVDEAMRRIRAL</sequence>
<comment type="function">
    <text evidence="1">Involved in the synthesis of meso-diaminopimelate (m-DAP or DL-DAP), required for both lysine and peptidoglycan biosynthesis. Catalyzes the direct conversion of tetrahydrodipicolinate to LL-diaminopimelate.</text>
</comment>
<comment type="catalytic activity">
    <reaction evidence="1">
        <text>(2S,6S)-2,6-diaminopimelate + 2-oxoglutarate = (S)-2,3,4,5-tetrahydrodipicolinate + L-glutamate + H2O + H(+)</text>
        <dbReference type="Rhea" id="RHEA:23988"/>
        <dbReference type="ChEBI" id="CHEBI:15377"/>
        <dbReference type="ChEBI" id="CHEBI:15378"/>
        <dbReference type="ChEBI" id="CHEBI:16810"/>
        <dbReference type="ChEBI" id="CHEBI:16845"/>
        <dbReference type="ChEBI" id="CHEBI:29985"/>
        <dbReference type="ChEBI" id="CHEBI:57609"/>
        <dbReference type="EC" id="2.6.1.83"/>
    </reaction>
</comment>
<comment type="cofactor">
    <cofactor evidence="1">
        <name>pyridoxal 5'-phosphate</name>
        <dbReference type="ChEBI" id="CHEBI:597326"/>
    </cofactor>
</comment>
<comment type="pathway">
    <text evidence="1">Amino-acid biosynthesis; L-lysine biosynthesis via DAP pathway; LL-2,6-diaminopimelate from (S)-tetrahydrodipicolinate (aminotransferase route): step 1/1.</text>
</comment>
<comment type="subunit">
    <text evidence="1">Homodimer.</text>
</comment>
<comment type="similarity">
    <text evidence="1">Belongs to the class-I pyridoxal-phosphate-dependent aminotransferase family. LL-diaminopimelate aminotransferase subfamily.</text>
</comment>
<comment type="sequence caution" evidence="2">
    <conflict type="erroneous initiation">
        <sequence resource="EMBL-CDS" id="CAE21966"/>
    </conflict>
</comment>
<gene>
    <name evidence="1" type="primary">dapL</name>
    <name type="ordered locus">PMT_1791</name>
</gene>
<accession>Q7V4Z3</accession>
<evidence type="ECO:0000255" key="1">
    <source>
        <dbReference type="HAMAP-Rule" id="MF_01642"/>
    </source>
</evidence>
<evidence type="ECO:0000305" key="2"/>
<feature type="chain" id="PRO_0000312538" description="LL-diaminopimelate aminotransferase">
    <location>
        <begin position="1"/>
        <end position="408"/>
    </location>
</feature>
<feature type="binding site" evidence="1">
    <location>
        <position position="15"/>
    </location>
    <ligand>
        <name>substrate</name>
    </ligand>
</feature>
<feature type="binding site" evidence="1">
    <location>
        <position position="42"/>
    </location>
    <ligand>
        <name>substrate</name>
    </ligand>
</feature>
<feature type="binding site" evidence="1">
    <location>
        <position position="72"/>
    </location>
    <ligand>
        <name>pyridoxal 5'-phosphate</name>
        <dbReference type="ChEBI" id="CHEBI:597326"/>
    </ligand>
</feature>
<feature type="binding site" evidence="1">
    <location>
        <begin position="108"/>
        <end position="109"/>
    </location>
    <ligand>
        <name>pyridoxal 5'-phosphate</name>
        <dbReference type="ChEBI" id="CHEBI:597326"/>
    </ligand>
</feature>
<feature type="binding site" evidence="1">
    <location>
        <position position="109"/>
    </location>
    <ligand>
        <name>substrate</name>
    </ligand>
</feature>
<feature type="binding site" evidence="1">
    <location>
        <position position="132"/>
    </location>
    <ligand>
        <name>pyridoxal 5'-phosphate</name>
        <dbReference type="ChEBI" id="CHEBI:597326"/>
    </ligand>
</feature>
<feature type="binding site" evidence="1">
    <location>
        <position position="132"/>
    </location>
    <ligand>
        <name>substrate</name>
    </ligand>
</feature>
<feature type="binding site" evidence="1">
    <location>
        <position position="187"/>
    </location>
    <ligand>
        <name>pyridoxal 5'-phosphate</name>
        <dbReference type="ChEBI" id="CHEBI:597326"/>
    </ligand>
</feature>
<feature type="binding site" evidence="1">
    <location>
        <position position="187"/>
    </location>
    <ligand>
        <name>substrate</name>
    </ligand>
</feature>
<feature type="binding site" evidence="1">
    <location>
        <position position="218"/>
    </location>
    <ligand>
        <name>pyridoxal 5'-phosphate</name>
        <dbReference type="ChEBI" id="CHEBI:597326"/>
    </ligand>
</feature>
<feature type="binding site" evidence="1">
    <location>
        <begin position="246"/>
        <end position="248"/>
    </location>
    <ligand>
        <name>pyridoxal 5'-phosphate</name>
        <dbReference type="ChEBI" id="CHEBI:597326"/>
    </ligand>
</feature>
<feature type="binding site" evidence="1">
    <location>
        <position position="257"/>
    </location>
    <ligand>
        <name>pyridoxal 5'-phosphate</name>
        <dbReference type="ChEBI" id="CHEBI:597326"/>
    </ligand>
</feature>
<feature type="binding site" evidence="1">
    <location>
        <position position="292"/>
    </location>
    <ligand>
        <name>pyridoxal 5'-phosphate</name>
        <dbReference type="ChEBI" id="CHEBI:597326"/>
    </ligand>
</feature>
<feature type="binding site" evidence="1">
    <location>
        <position position="292"/>
    </location>
    <ligand>
        <name>substrate</name>
    </ligand>
</feature>
<feature type="binding site" evidence="1">
    <location>
        <position position="388"/>
    </location>
    <ligand>
        <name>substrate</name>
    </ligand>
</feature>
<feature type="modified residue" description="N6-(pyridoxal phosphate)lysine" evidence="1">
    <location>
        <position position="249"/>
    </location>
</feature>
<dbReference type="EC" id="2.6.1.83" evidence="1"/>
<dbReference type="EMBL" id="BX548175">
    <property type="protein sequence ID" value="CAE21966.1"/>
    <property type="status" value="ALT_INIT"/>
    <property type="molecule type" value="Genomic_DNA"/>
</dbReference>
<dbReference type="RefSeq" id="WP_041385208.1">
    <property type="nucleotide sequence ID" value="NC_005071.1"/>
</dbReference>
<dbReference type="SMR" id="Q7V4Z3"/>
<dbReference type="KEGG" id="pmt:PMT_1791"/>
<dbReference type="eggNOG" id="COG0436">
    <property type="taxonomic scope" value="Bacteria"/>
</dbReference>
<dbReference type="HOGENOM" id="CLU_051433_0_0_3"/>
<dbReference type="UniPathway" id="UPA00034">
    <property type="reaction ID" value="UER00466"/>
</dbReference>
<dbReference type="Proteomes" id="UP000001423">
    <property type="component" value="Chromosome"/>
</dbReference>
<dbReference type="GO" id="GO:0010285">
    <property type="term" value="F:L,L-diaminopimelate aminotransferase activity"/>
    <property type="evidence" value="ECO:0007669"/>
    <property type="project" value="UniProtKB-UniRule"/>
</dbReference>
<dbReference type="GO" id="GO:0030170">
    <property type="term" value="F:pyridoxal phosphate binding"/>
    <property type="evidence" value="ECO:0007669"/>
    <property type="project" value="UniProtKB-UniRule"/>
</dbReference>
<dbReference type="GO" id="GO:0033362">
    <property type="term" value="P:lysine biosynthetic process via diaminopimelate, diaminopimelate-aminotransferase pathway"/>
    <property type="evidence" value="ECO:0007669"/>
    <property type="project" value="UniProtKB-UniRule"/>
</dbReference>
<dbReference type="CDD" id="cd00609">
    <property type="entry name" value="AAT_like"/>
    <property type="match status" value="1"/>
</dbReference>
<dbReference type="FunFam" id="3.40.640.10:FF:000099">
    <property type="entry name" value="LL-diaminopimelate aminotransferase, chloroplastic"/>
    <property type="match status" value="1"/>
</dbReference>
<dbReference type="Gene3D" id="3.90.1150.10">
    <property type="entry name" value="Aspartate Aminotransferase, domain 1"/>
    <property type="match status" value="1"/>
</dbReference>
<dbReference type="Gene3D" id="3.40.640.10">
    <property type="entry name" value="Type I PLP-dependent aspartate aminotransferase-like (Major domain)"/>
    <property type="match status" value="1"/>
</dbReference>
<dbReference type="HAMAP" id="MF_01642">
    <property type="entry name" value="DapL_aminotrans_1"/>
    <property type="match status" value="1"/>
</dbReference>
<dbReference type="InterPro" id="IPR004839">
    <property type="entry name" value="Aminotransferase_I/II_large"/>
</dbReference>
<dbReference type="InterPro" id="IPR019942">
    <property type="entry name" value="DapL/ALD1"/>
</dbReference>
<dbReference type="InterPro" id="IPR015424">
    <property type="entry name" value="PyrdxlP-dep_Trfase"/>
</dbReference>
<dbReference type="InterPro" id="IPR015421">
    <property type="entry name" value="PyrdxlP-dep_Trfase_major"/>
</dbReference>
<dbReference type="InterPro" id="IPR015422">
    <property type="entry name" value="PyrdxlP-dep_Trfase_small"/>
</dbReference>
<dbReference type="NCBIfam" id="TIGR03542">
    <property type="entry name" value="DAPAT_plant"/>
    <property type="match status" value="1"/>
</dbReference>
<dbReference type="PANTHER" id="PTHR43144">
    <property type="entry name" value="AMINOTRANSFERASE"/>
    <property type="match status" value="1"/>
</dbReference>
<dbReference type="Pfam" id="PF00155">
    <property type="entry name" value="Aminotran_1_2"/>
    <property type="match status" value="1"/>
</dbReference>
<dbReference type="SUPFAM" id="SSF53383">
    <property type="entry name" value="PLP-dependent transferases"/>
    <property type="match status" value="1"/>
</dbReference>
<proteinExistence type="inferred from homology"/>
<organism>
    <name type="scientific">Prochlorococcus marinus (strain MIT 9313)</name>
    <dbReference type="NCBI Taxonomy" id="74547"/>
    <lineage>
        <taxon>Bacteria</taxon>
        <taxon>Bacillati</taxon>
        <taxon>Cyanobacteriota</taxon>
        <taxon>Cyanophyceae</taxon>
        <taxon>Synechococcales</taxon>
        <taxon>Prochlorococcaceae</taxon>
        <taxon>Prochlorococcus</taxon>
    </lineage>
</organism>
<name>DAPAT_PROMM</name>